<evidence type="ECO:0000250" key="1"/>
<evidence type="ECO:0000305" key="2"/>
<evidence type="ECO:0007744" key="3">
    <source>
    </source>
</evidence>
<proteinExistence type="evidence at protein level"/>
<accession>P70566</accession>
<comment type="function">
    <text evidence="1">Blocks the elongation and depolymerization of the actin filaments at the pointed end. The Tmod/TM complex contributes to the formation of the short actin protofilament, which in turn defines the geometry of the membrane skeleton (By similarity).</text>
</comment>
<comment type="subunit">
    <text>Binds to the N-terminus of tropomyosin and to actin. Binds to TMBr3 as well as to other low molecular mass tropomyosins (TM5a or TM5), but not to high molecular mass tropomyosins (TM2 or TMBr1).</text>
</comment>
<comment type="subcellular location">
    <subcellularLocation>
        <location evidence="1">Cytoplasm</location>
        <location evidence="1">Cytoskeleton</location>
    </subcellularLocation>
</comment>
<comment type="tissue specificity">
    <text>Neuronal-tissue specific.</text>
</comment>
<comment type="similarity">
    <text evidence="2">Belongs to the tropomodulin family.</text>
</comment>
<name>TMOD2_RAT</name>
<reference key="1">
    <citation type="journal article" date="1996" name="J. Cell Sci.">
        <title>N-tropomodulin: a novel isoform of tropomodulin identified as the major binding protein to brain tropomyosin.</title>
        <authorList>
            <person name="Watakabe A."/>
            <person name="Kobayashi R."/>
            <person name="Helfman D.M."/>
        </authorList>
    </citation>
    <scope>NUCLEOTIDE SEQUENCE [MRNA]</scope>
    <source>
        <strain>Sprague-Dawley</strain>
        <tissue>Brain</tissue>
    </source>
</reference>
<reference key="2">
    <citation type="submission" date="2007-04" db="UniProtKB">
        <authorList>
            <person name="Lubec G."/>
            <person name="Chen W.-Q."/>
        </authorList>
    </citation>
    <scope>PROTEIN SEQUENCE OF 82-93 AND 238-251</scope>
    <scope>IDENTIFICATION BY MASS SPECTROMETRY</scope>
    <source>
        <strain>Sprague-Dawley</strain>
        <tissue>Hippocampus</tissue>
    </source>
</reference>
<reference key="3">
    <citation type="journal article" date="2012" name="Nat. Commun.">
        <title>Quantitative maps of protein phosphorylation sites across 14 different rat organs and tissues.</title>
        <authorList>
            <person name="Lundby A."/>
            <person name="Secher A."/>
            <person name="Lage K."/>
            <person name="Nordsborg N.B."/>
            <person name="Dmytriyev A."/>
            <person name="Lundby C."/>
            <person name="Olsen J.V."/>
        </authorList>
    </citation>
    <scope>PHOSPHORYLATION [LARGE SCALE ANALYSIS] AT SER-25</scope>
    <scope>IDENTIFICATION BY MASS SPECTROMETRY [LARGE SCALE ANALYSIS]</scope>
</reference>
<organism>
    <name type="scientific">Rattus norvegicus</name>
    <name type="common">Rat</name>
    <dbReference type="NCBI Taxonomy" id="10116"/>
    <lineage>
        <taxon>Eukaryota</taxon>
        <taxon>Metazoa</taxon>
        <taxon>Chordata</taxon>
        <taxon>Craniata</taxon>
        <taxon>Vertebrata</taxon>
        <taxon>Euteleostomi</taxon>
        <taxon>Mammalia</taxon>
        <taxon>Eutheria</taxon>
        <taxon>Euarchontoglires</taxon>
        <taxon>Glires</taxon>
        <taxon>Rodentia</taxon>
        <taxon>Myomorpha</taxon>
        <taxon>Muroidea</taxon>
        <taxon>Muridae</taxon>
        <taxon>Murinae</taxon>
        <taxon>Rattus</taxon>
    </lineage>
</organism>
<protein>
    <recommendedName>
        <fullName>Tropomodulin-2</fullName>
    </recommendedName>
    <alternativeName>
        <fullName>Neuronal tropomodulin</fullName>
        <shortName>N-Tmod</shortName>
    </alternativeName>
</protein>
<gene>
    <name type="primary">Tmod2</name>
    <name type="synonym">Ntmod</name>
</gene>
<feature type="chain" id="PRO_0000186133" description="Tropomodulin-2">
    <location>
        <begin position="1"/>
        <end position="351"/>
    </location>
</feature>
<feature type="modified residue" description="Phosphoserine" evidence="3">
    <location>
        <position position="25"/>
    </location>
</feature>
<sequence>MALPFQKGLEKYKNIDEDELLGKLSEEELKQLENVLDDLDPESATLPAGFRQKDQTQKAATGPFDREHLLMYLEKEALEQKDREDFVPFTGEKKGRVFIPKEKPVETRKEEKVTLDPELEEALASASDTELYDLAAVLGVHNLLNNPKFDEETTNGQGRKGPVRNVVKGEKAKPVFEEPPNPTNVEASLQQMKANDPSLQEVNLNNIKNIPIPTLKEFAKALETNTHVRKFSLAATRSNDPVALAFAEMLKVNKTLKSLNVESNFITGAGILALVEALRENDTLTEIKIDNQRQQLGTAVEMEIAQMLEENSRILKFGYQFTKQGPRTRVAAAITKNNDLVRKKRVEGDRR</sequence>
<dbReference type="EMBL" id="U59240">
    <property type="protein sequence ID" value="AAC52854.1"/>
    <property type="molecule type" value="mRNA"/>
</dbReference>
<dbReference type="RefSeq" id="NP_113801.1">
    <property type="nucleotide sequence ID" value="NM_031613.2"/>
</dbReference>
<dbReference type="RefSeq" id="XP_006243469.1">
    <property type="nucleotide sequence ID" value="XM_006243407.5"/>
</dbReference>
<dbReference type="RefSeq" id="XP_006243470.1">
    <property type="nucleotide sequence ID" value="XM_006243408.5"/>
</dbReference>
<dbReference type="RefSeq" id="XP_008764553.1">
    <property type="nucleotide sequence ID" value="XM_008766331.4"/>
</dbReference>
<dbReference type="RefSeq" id="XP_017451363.1">
    <property type="nucleotide sequence ID" value="XM_017595874.1"/>
</dbReference>
<dbReference type="SMR" id="P70566"/>
<dbReference type="BioGRID" id="248623">
    <property type="interactions" value="5"/>
</dbReference>
<dbReference type="FunCoup" id="P70566">
    <property type="interactions" value="1660"/>
</dbReference>
<dbReference type="IntAct" id="P70566">
    <property type="interactions" value="3"/>
</dbReference>
<dbReference type="MINT" id="P70566"/>
<dbReference type="STRING" id="10116.ENSRNOP00000014124"/>
<dbReference type="GlyGen" id="P70566">
    <property type="glycosylation" value="1 site, 1 O-linked glycan (1 site)"/>
</dbReference>
<dbReference type="iPTMnet" id="P70566"/>
<dbReference type="PhosphoSitePlus" id="P70566"/>
<dbReference type="jPOST" id="P70566"/>
<dbReference type="PaxDb" id="10116-ENSRNOP00000014124"/>
<dbReference type="Ensembl" id="ENSRNOT00000014124.4">
    <property type="protein sequence ID" value="ENSRNOP00000014124.2"/>
    <property type="gene ID" value="ENSRNOG00000010447.5"/>
</dbReference>
<dbReference type="GeneID" id="58814"/>
<dbReference type="KEGG" id="rno:58814"/>
<dbReference type="UCSC" id="RGD:61948">
    <property type="organism name" value="rat"/>
</dbReference>
<dbReference type="AGR" id="RGD:61948"/>
<dbReference type="CTD" id="29767"/>
<dbReference type="RGD" id="61948">
    <property type="gene designation" value="Tmod2"/>
</dbReference>
<dbReference type="eggNOG" id="KOG3735">
    <property type="taxonomic scope" value="Eukaryota"/>
</dbReference>
<dbReference type="GeneTree" id="ENSGT00940000160631"/>
<dbReference type="HOGENOM" id="CLU_031052_0_1_1"/>
<dbReference type="InParanoid" id="P70566"/>
<dbReference type="OrthoDB" id="52607at9989"/>
<dbReference type="PhylomeDB" id="P70566"/>
<dbReference type="TreeFam" id="TF315841"/>
<dbReference type="Reactome" id="R-RNO-390522">
    <property type="pathway name" value="Striated Muscle Contraction"/>
</dbReference>
<dbReference type="PRO" id="PR:P70566"/>
<dbReference type="Proteomes" id="UP000002494">
    <property type="component" value="Chromosome 8"/>
</dbReference>
<dbReference type="Bgee" id="ENSRNOG00000010447">
    <property type="expression patterns" value="Expressed in frontal cortex and 15 other cell types or tissues"/>
</dbReference>
<dbReference type="GO" id="GO:0005856">
    <property type="term" value="C:cytoskeleton"/>
    <property type="evidence" value="ECO:0000318"/>
    <property type="project" value="GO_Central"/>
</dbReference>
<dbReference type="GO" id="GO:0030426">
    <property type="term" value="C:growth cone"/>
    <property type="evidence" value="ECO:0000314"/>
    <property type="project" value="RGD"/>
</dbReference>
<dbReference type="GO" id="GO:0030016">
    <property type="term" value="C:myofibril"/>
    <property type="evidence" value="ECO:0000318"/>
    <property type="project" value="GO_Central"/>
</dbReference>
<dbReference type="GO" id="GO:0005865">
    <property type="term" value="C:striated muscle thin filament"/>
    <property type="evidence" value="ECO:0000318"/>
    <property type="project" value="GO_Central"/>
</dbReference>
<dbReference type="GO" id="GO:0045202">
    <property type="term" value="C:synapse"/>
    <property type="evidence" value="ECO:0007669"/>
    <property type="project" value="GOC"/>
</dbReference>
<dbReference type="GO" id="GO:0003779">
    <property type="term" value="F:actin binding"/>
    <property type="evidence" value="ECO:0000314"/>
    <property type="project" value="RGD"/>
</dbReference>
<dbReference type="GO" id="GO:0005523">
    <property type="term" value="F:tropomyosin binding"/>
    <property type="evidence" value="ECO:0000314"/>
    <property type="project" value="RGD"/>
</dbReference>
<dbReference type="GO" id="GO:0007015">
    <property type="term" value="P:actin filament organization"/>
    <property type="evidence" value="ECO:0000318"/>
    <property type="project" value="GO_Central"/>
</dbReference>
<dbReference type="GO" id="GO:0007611">
    <property type="term" value="P:learning or memory"/>
    <property type="evidence" value="ECO:0000266"/>
    <property type="project" value="RGD"/>
</dbReference>
<dbReference type="GO" id="GO:0006936">
    <property type="term" value="P:muscle contraction"/>
    <property type="evidence" value="ECO:0000318"/>
    <property type="project" value="GO_Central"/>
</dbReference>
<dbReference type="GO" id="GO:0030239">
    <property type="term" value="P:myofibril assembly"/>
    <property type="evidence" value="ECO:0000318"/>
    <property type="project" value="GO_Central"/>
</dbReference>
<dbReference type="GO" id="GO:0007270">
    <property type="term" value="P:neuron-neuron synaptic transmission"/>
    <property type="evidence" value="ECO:0000266"/>
    <property type="project" value="RGD"/>
</dbReference>
<dbReference type="GO" id="GO:0051694">
    <property type="term" value="P:pointed-end actin filament capping"/>
    <property type="evidence" value="ECO:0007669"/>
    <property type="project" value="InterPro"/>
</dbReference>
<dbReference type="GO" id="GO:0045745">
    <property type="term" value="P:positive regulation of G protein-coupled receptor signaling pathway"/>
    <property type="evidence" value="ECO:0000266"/>
    <property type="project" value="RGD"/>
</dbReference>
<dbReference type="FunFam" id="3.80.10.10:FF:000006">
    <property type="entry name" value="Tropomodulin 2"/>
    <property type="match status" value="1"/>
</dbReference>
<dbReference type="Gene3D" id="3.80.10.10">
    <property type="entry name" value="Ribonuclease Inhibitor"/>
    <property type="match status" value="1"/>
</dbReference>
<dbReference type="InterPro" id="IPR032675">
    <property type="entry name" value="LRR_dom_sf"/>
</dbReference>
<dbReference type="InterPro" id="IPR004934">
    <property type="entry name" value="TMOD"/>
</dbReference>
<dbReference type="PANTHER" id="PTHR10901">
    <property type="entry name" value="TROPOMODULIN"/>
    <property type="match status" value="1"/>
</dbReference>
<dbReference type="PANTHER" id="PTHR10901:SF15">
    <property type="entry name" value="TROPOMODULIN-2"/>
    <property type="match status" value="1"/>
</dbReference>
<dbReference type="Pfam" id="PF03250">
    <property type="entry name" value="Tropomodulin"/>
    <property type="match status" value="1"/>
</dbReference>
<dbReference type="SUPFAM" id="SSF52047">
    <property type="entry name" value="RNI-like"/>
    <property type="match status" value="1"/>
</dbReference>
<keyword id="KW-0009">Actin-binding</keyword>
<keyword id="KW-0963">Cytoplasm</keyword>
<keyword id="KW-0206">Cytoskeleton</keyword>
<keyword id="KW-0903">Direct protein sequencing</keyword>
<keyword id="KW-0597">Phosphoprotein</keyword>
<keyword id="KW-1185">Reference proteome</keyword>